<feature type="chain" id="PRO_0000167541" description="Ribosome-recycling factor">
    <location>
        <begin position="1"/>
        <end position="184"/>
    </location>
</feature>
<feature type="region of interest" description="Disordered" evidence="2">
    <location>
        <begin position="134"/>
        <end position="167"/>
    </location>
</feature>
<name>RRF_STAAR</name>
<gene>
    <name evidence="1" type="primary">frr</name>
    <name type="ordered locus">SAR1235</name>
</gene>
<evidence type="ECO:0000255" key="1">
    <source>
        <dbReference type="HAMAP-Rule" id="MF_00040"/>
    </source>
</evidence>
<evidence type="ECO:0000256" key="2">
    <source>
        <dbReference type="SAM" id="MobiDB-lite"/>
    </source>
</evidence>
<reference key="1">
    <citation type="journal article" date="2004" name="Proc. Natl. Acad. Sci. U.S.A.">
        <title>Complete genomes of two clinical Staphylococcus aureus strains: evidence for the rapid evolution of virulence and drug resistance.</title>
        <authorList>
            <person name="Holden M.T.G."/>
            <person name="Feil E.J."/>
            <person name="Lindsay J.A."/>
            <person name="Peacock S.J."/>
            <person name="Day N.P.J."/>
            <person name="Enright M.C."/>
            <person name="Foster T.J."/>
            <person name="Moore C.E."/>
            <person name="Hurst L."/>
            <person name="Atkin R."/>
            <person name="Barron A."/>
            <person name="Bason N."/>
            <person name="Bentley S.D."/>
            <person name="Chillingworth C."/>
            <person name="Chillingworth T."/>
            <person name="Churcher C."/>
            <person name="Clark L."/>
            <person name="Corton C."/>
            <person name="Cronin A."/>
            <person name="Doggett J."/>
            <person name="Dowd L."/>
            <person name="Feltwell T."/>
            <person name="Hance Z."/>
            <person name="Harris B."/>
            <person name="Hauser H."/>
            <person name="Holroyd S."/>
            <person name="Jagels K."/>
            <person name="James K.D."/>
            <person name="Lennard N."/>
            <person name="Line A."/>
            <person name="Mayes R."/>
            <person name="Moule S."/>
            <person name="Mungall K."/>
            <person name="Ormond D."/>
            <person name="Quail M.A."/>
            <person name="Rabbinowitsch E."/>
            <person name="Rutherford K.M."/>
            <person name="Sanders M."/>
            <person name="Sharp S."/>
            <person name="Simmonds M."/>
            <person name="Stevens K."/>
            <person name="Whitehead S."/>
            <person name="Barrell B.G."/>
            <person name="Spratt B.G."/>
            <person name="Parkhill J."/>
        </authorList>
    </citation>
    <scope>NUCLEOTIDE SEQUENCE [LARGE SCALE GENOMIC DNA]</scope>
    <source>
        <strain>MRSA252</strain>
    </source>
</reference>
<sequence length="184" mass="20353">MSDIINETKSRMQKSIESLSRELANISAGRANSNLLNGVTVDYYGAPTPVQQLASINVPEARLLVISPYDKTSVADIEKAIIAANLGVNPTSDGEVIRIAVPALTEERRKERVKDVKKIGEEAKVSVRNIRRDMNDQLKKDEKNGDITEDELRSGTEDVQKATDNSIKEIDQMIADKEKDIMSV</sequence>
<comment type="function">
    <text evidence="1">Responsible for the release of ribosomes from messenger RNA at the termination of protein biosynthesis. May increase the efficiency of translation by recycling ribosomes from one round of translation to another.</text>
</comment>
<comment type="subcellular location">
    <subcellularLocation>
        <location evidence="1">Cytoplasm</location>
    </subcellularLocation>
</comment>
<comment type="similarity">
    <text evidence="1">Belongs to the RRF family.</text>
</comment>
<accession>Q6GHH6</accession>
<dbReference type="EMBL" id="BX571856">
    <property type="protein sequence ID" value="CAG40237.1"/>
    <property type="molecule type" value="Genomic_DNA"/>
</dbReference>
<dbReference type="RefSeq" id="WP_001280006.1">
    <property type="nucleotide sequence ID" value="NC_002952.2"/>
</dbReference>
<dbReference type="SMR" id="Q6GHH6"/>
<dbReference type="KEGG" id="sar:SAR1235"/>
<dbReference type="HOGENOM" id="CLU_073981_2_0_9"/>
<dbReference type="Proteomes" id="UP000000596">
    <property type="component" value="Chromosome"/>
</dbReference>
<dbReference type="GO" id="GO:0005737">
    <property type="term" value="C:cytoplasm"/>
    <property type="evidence" value="ECO:0007669"/>
    <property type="project" value="UniProtKB-SubCell"/>
</dbReference>
<dbReference type="GO" id="GO:0043023">
    <property type="term" value="F:ribosomal large subunit binding"/>
    <property type="evidence" value="ECO:0007669"/>
    <property type="project" value="TreeGrafter"/>
</dbReference>
<dbReference type="GO" id="GO:0006415">
    <property type="term" value="P:translational termination"/>
    <property type="evidence" value="ECO:0007669"/>
    <property type="project" value="UniProtKB-UniRule"/>
</dbReference>
<dbReference type="CDD" id="cd00520">
    <property type="entry name" value="RRF"/>
    <property type="match status" value="1"/>
</dbReference>
<dbReference type="FunFam" id="1.10.132.20:FF:000001">
    <property type="entry name" value="Ribosome-recycling factor"/>
    <property type="match status" value="1"/>
</dbReference>
<dbReference type="FunFam" id="3.30.1360.40:FF:000001">
    <property type="entry name" value="Ribosome-recycling factor"/>
    <property type="match status" value="1"/>
</dbReference>
<dbReference type="Gene3D" id="3.30.1360.40">
    <property type="match status" value="1"/>
</dbReference>
<dbReference type="Gene3D" id="1.10.132.20">
    <property type="entry name" value="Ribosome-recycling factor"/>
    <property type="match status" value="1"/>
</dbReference>
<dbReference type="HAMAP" id="MF_00040">
    <property type="entry name" value="RRF"/>
    <property type="match status" value="1"/>
</dbReference>
<dbReference type="InterPro" id="IPR002661">
    <property type="entry name" value="Ribosome_recyc_fac"/>
</dbReference>
<dbReference type="InterPro" id="IPR023584">
    <property type="entry name" value="Ribosome_recyc_fac_dom"/>
</dbReference>
<dbReference type="InterPro" id="IPR036191">
    <property type="entry name" value="RRF_sf"/>
</dbReference>
<dbReference type="NCBIfam" id="TIGR00496">
    <property type="entry name" value="frr"/>
    <property type="match status" value="1"/>
</dbReference>
<dbReference type="PANTHER" id="PTHR20982:SF3">
    <property type="entry name" value="MITOCHONDRIAL RIBOSOME RECYCLING FACTOR PSEUDO 1"/>
    <property type="match status" value="1"/>
</dbReference>
<dbReference type="PANTHER" id="PTHR20982">
    <property type="entry name" value="RIBOSOME RECYCLING FACTOR"/>
    <property type="match status" value="1"/>
</dbReference>
<dbReference type="Pfam" id="PF01765">
    <property type="entry name" value="RRF"/>
    <property type="match status" value="1"/>
</dbReference>
<dbReference type="SUPFAM" id="SSF55194">
    <property type="entry name" value="Ribosome recycling factor, RRF"/>
    <property type="match status" value="1"/>
</dbReference>
<protein>
    <recommendedName>
        <fullName evidence="1">Ribosome-recycling factor</fullName>
        <shortName evidence="1">RRF</shortName>
    </recommendedName>
    <alternativeName>
        <fullName evidence="1">Ribosome-releasing factor</fullName>
    </alternativeName>
</protein>
<keyword id="KW-0963">Cytoplasm</keyword>
<keyword id="KW-0648">Protein biosynthesis</keyword>
<proteinExistence type="inferred from homology"/>
<organism>
    <name type="scientific">Staphylococcus aureus (strain MRSA252)</name>
    <dbReference type="NCBI Taxonomy" id="282458"/>
    <lineage>
        <taxon>Bacteria</taxon>
        <taxon>Bacillati</taxon>
        <taxon>Bacillota</taxon>
        <taxon>Bacilli</taxon>
        <taxon>Bacillales</taxon>
        <taxon>Staphylococcaceae</taxon>
        <taxon>Staphylococcus</taxon>
    </lineage>
</organism>